<organism>
    <name type="scientific">Prochlorococcus marinus (strain MIT 9303)</name>
    <dbReference type="NCBI Taxonomy" id="59922"/>
    <lineage>
        <taxon>Bacteria</taxon>
        <taxon>Bacillati</taxon>
        <taxon>Cyanobacteriota</taxon>
        <taxon>Cyanophyceae</taxon>
        <taxon>Synechococcales</taxon>
        <taxon>Prochlorococcaceae</taxon>
        <taxon>Prochlorococcus</taxon>
    </lineage>
</organism>
<feature type="chain" id="PRO_0000353643" description="NAD(P)H-quinone oxidoreductase subunit O">
    <location>
        <begin position="1"/>
        <end position="81"/>
    </location>
</feature>
<comment type="function">
    <text evidence="1">NDH-1 shuttles electrons from an unknown electron donor, via FMN and iron-sulfur (Fe-S) centers, to quinones in the respiratory and/or the photosynthetic chain. The immediate electron acceptor for the enzyme in this species is believed to be plastoquinone. Couples the redox reaction to proton translocation, and thus conserves the redox energy in a proton gradient. Cyanobacterial NDH-1 also plays a role in inorganic carbon-concentration.</text>
</comment>
<comment type="catalytic activity">
    <reaction evidence="1">
        <text>a plastoquinone + NADH + (n+1) H(+)(in) = a plastoquinol + NAD(+) + n H(+)(out)</text>
        <dbReference type="Rhea" id="RHEA:42608"/>
        <dbReference type="Rhea" id="RHEA-COMP:9561"/>
        <dbReference type="Rhea" id="RHEA-COMP:9562"/>
        <dbReference type="ChEBI" id="CHEBI:15378"/>
        <dbReference type="ChEBI" id="CHEBI:17757"/>
        <dbReference type="ChEBI" id="CHEBI:57540"/>
        <dbReference type="ChEBI" id="CHEBI:57945"/>
        <dbReference type="ChEBI" id="CHEBI:62192"/>
    </reaction>
</comment>
<comment type="catalytic activity">
    <reaction evidence="1">
        <text>a plastoquinone + NADPH + (n+1) H(+)(in) = a plastoquinol + NADP(+) + n H(+)(out)</text>
        <dbReference type="Rhea" id="RHEA:42612"/>
        <dbReference type="Rhea" id="RHEA-COMP:9561"/>
        <dbReference type="Rhea" id="RHEA-COMP:9562"/>
        <dbReference type="ChEBI" id="CHEBI:15378"/>
        <dbReference type="ChEBI" id="CHEBI:17757"/>
        <dbReference type="ChEBI" id="CHEBI:57783"/>
        <dbReference type="ChEBI" id="CHEBI:58349"/>
        <dbReference type="ChEBI" id="CHEBI:62192"/>
    </reaction>
</comment>
<comment type="subunit">
    <text evidence="1">NDH-1 can be composed of about 15 different subunits; different subcomplexes with different compositions have been identified which probably have different functions.</text>
</comment>
<comment type="subcellular location">
    <subcellularLocation>
        <location evidence="1">Cellular thylakoid membrane</location>
        <topology evidence="1">Peripheral membrane protein</topology>
        <orientation evidence="1">Cytoplasmic side</orientation>
    </subcellularLocation>
</comment>
<comment type="similarity">
    <text evidence="1">Belongs to the complex I NdhO subunit family.</text>
</comment>
<name>NDHO_PROM3</name>
<keyword id="KW-0472">Membrane</keyword>
<keyword id="KW-0520">NAD</keyword>
<keyword id="KW-0521">NADP</keyword>
<keyword id="KW-0618">Plastoquinone</keyword>
<keyword id="KW-0874">Quinone</keyword>
<keyword id="KW-0793">Thylakoid</keyword>
<keyword id="KW-1278">Translocase</keyword>
<keyword id="KW-0813">Transport</keyword>
<protein>
    <recommendedName>
        <fullName evidence="1">NAD(P)H-quinone oxidoreductase subunit O</fullName>
        <ecNumber evidence="1">7.1.1.-</ecNumber>
    </recommendedName>
    <alternativeName>
        <fullName evidence="1">NAD(P)H dehydrogenase I subunit O</fullName>
    </alternativeName>
    <alternativeName>
        <fullName>NDH-1 subunit O</fullName>
    </alternativeName>
    <alternativeName>
        <fullName>NDH-O</fullName>
    </alternativeName>
</protein>
<gene>
    <name evidence="1" type="primary">ndhO</name>
    <name type="ordered locus">P9303_26281</name>
</gene>
<accession>A2CCZ8</accession>
<dbReference type="EC" id="7.1.1.-" evidence="1"/>
<dbReference type="EMBL" id="CP000554">
    <property type="protein sequence ID" value="ABM79358.1"/>
    <property type="molecule type" value="Genomic_DNA"/>
</dbReference>
<dbReference type="RefSeq" id="WP_011131340.1">
    <property type="nucleotide sequence ID" value="NC_008820.1"/>
</dbReference>
<dbReference type="SMR" id="A2CCZ8"/>
<dbReference type="STRING" id="59922.P9303_26281"/>
<dbReference type="KEGG" id="pmf:P9303_26281"/>
<dbReference type="HOGENOM" id="CLU_195299_0_0_3"/>
<dbReference type="BioCyc" id="PMAR59922:G1G80-2303-MONOMER"/>
<dbReference type="Proteomes" id="UP000002274">
    <property type="component" value="Chromosome"/>
</dbReference>
<dbReference type="GO" id="GO:0031676">
    <property type="term" value="C:plasma membrane-derived thylakoid membrane"/>
    <property type="evidence" value="ECO:0007669"/>
    <property type="project" value="UniProtKB-SubCell"/>
</dbReference>
<dbReference type="GO" id="GO:0016655">
    <property type="term" value="F:oxidoreductase activity, acting on NAD(P)H, quinone or similar compound as acceptor"/>
    <property type="evidence" value="ECO:0007669"/>
    <property type="project" value="UniProtKB-UniRule"/>
</dbReference>
<dbReference type="GO" id="GO:0048038">
    <property type="term" value="F:quinone binding"/>
    <property type="evidence" value="ECO:0007669"/>
    <property type="project" value="UniProtKB-KW"/>
</dbReference>
<dbReference type="HAMAP" id="MF_01354">
    <property type="entry name" value="NDH1_NDH1O"/>
    <property type="match status" value="1"/>
</dbReference>
<dbReference type="InterPro" id="IPR020905">
    <property type="entry name" value="NdhO"/>
</dbReference>
<dbReference type="Pfam" id="PF11910">
    <property type="entry name" value="NdhO"/>
    <property type="match status" value="1"/>
</dbReference>
<proteinExistence type="inferred from homology"/>
<sequence length="81" mass="8785">MAETSAPAKATAALKKGALVRVNRHAFSSSTEAAASDPSPPDYIFEGPGELLAVKEGYGQVRWRMPVPDVWLRIDQLEPFS</sequence>
<reference key="1">
    <citation type="journal article" date="2007" name="PLoS Genet.">
        <title>Patterns and implications of gene gain and loss in the evolution of Prochlorococcus.</title>
        <authorList>
            <person name="Kettler G.C."/>
            <person name="Martiny A.C."/>
            <person name="Huang K."/>
            <person name="Zucker J."/>
            <person name="Coleman M.L."/>
            <person name="Rodrigue S."/>
            <person name="Chen F."/>
            <person name="Lapidus A."/>
            <person name="Ferriera S."/>
            <person name="Johnson J."/>
            <person name="Steglich C."/>
            <person name="Church G.M."/>
            <person name="Richardson P."/>
            <person name="Chisholm S.W."/>
        </authorList>
    </citation>
    <scope>NUCLEOTIDE SEQUENCE [LARGE SCALE GENOMIC DNA]</scope>
    <source>
        <strain>MIT 9303</strain>
    </source>
</reference>
<evidence type="ECO:0000255" key="1">
    <source>
        <dbReference type="HAMAP-Rule" id="MF_01354"/>
    </source>
</evidence>